<gene>
    <name evidence="1" type="primary">minE</name>
    <name type="ordered locus">BMASAVP1_A0801</name>
</gene>
<comment type="function">
    <text evidence="1">Prevents the cell division inhibition by proteins MinC and MinD at internal division sites while permitting inhibition at polar sites. This ensures cell division at the proper site by restricting the formation of a division septum at the midpoint of the long axis of the cell.</text>
</comment>
<comment type="similarity">
    <text evidence="1">Belongs to the MinE family.</text>
</comment>
<evidence type="ECO:0000255" key="1">
    <source>
        <dbReference type="HAMAP-Rule" id="MF_00262"/>
    </source>
</evidence>
<sequence length="84" mass="9395">MSILSFLLGEKKKSAAVAKERLQLIIAHERVGGRPPADYLPALQKELVAVISKYVKISNDDIRVSLERQDDLEVLEVKIEIPQA</sequence>
<proteinExistence type="inferred from homology"/>
<dbReference type="EMBL" id="CP000526">
    <property type="protein sequence ID" value="ABM51497.1"/>
    <property type="molecule type" value="Genomic_DNA"/>
</dbReference>
<dbReference type="RefSeq" id="WP_004186076.1">
    <property type="nucleotide sequence ID" value="NC_008785.1"/>
</dbReference>
<dbReference type="SMR" id="A1V1P2"/>
<dbReference type="GeneID" id="93061170"/>
<dbReference type="KEGG" id="bmv:BMASAVP1_A0801"/>
<dbReference type="HOGENOM" id="CLU_137929_2_1_4"/>
<dbReference type="GO" id="GO:0051301">
    <property type="term" value="P:cell division"/>
    <property type="evidence" value="ECO:0007669"/>
    <property type="project" value="UniProtKB-KW"/>
</dbReference>
<dbReference type="GO" id="GO:0032955">
    <property type="term" value="P:regulation of division septum assembly"/>
    <property type="evidence" value="ECO:0007669"/>
    <property type="project" value="InterPro"/>
</dbReference>
<dbReference type="FunFam" id="3.30.1070.10:FF:000001">
    <property type="entry name" value="Cell division topological specificity factor"/>
    <property type="match status" value="1"/>
</dbReference>
<dbReference type="Gene3D" id="3.30.1070.10">
    <property type="entry name" value="Cell division topological specificity factor MinE"/>
    <property type="match status" value="1"/>
</dbReference>
<dbReference type="HAMAP" id="MF_00262">
    <property type="entry name" value="MinE"/>
    <property type="match status" value="1"/>
</dbReference>
<dbReference type="InterPro" id="IPR005527">
    <property type="entry name" value="MinE"/>
</dbReference>
<dbReference type="InterPro" id="IPR036707">
    <property type="entry name" value="MinE_sf"/>
</dbReference>
<dbReference type="NCBIfam" id="TIGR01215">
    <property type="entry name" value="minE"/>
    <property type="match status" value="1"/>
</dbReference>
<dbReference type="NCBIfam" id="NF001422">
    <property type="entry name" value="PRK00296.1"/>
    <property type="match status" value="1"/>
</dbReference>
<dbReference type="NCBIfam" id="NF010595">
    <property type="entry name" value="PRK13989.1"/>
    <property type="match status" value="1"/>
</dbReference>
<dbReference type="Pfam" id="PF03776">
    <property type="entry name" value="MinE"/>
    <property type="match status" value="1"/>
</dbReference>
<dbReference type="SUPFAM" id="SSF55229">
    <property type="entry name" value="Cell division protein MinE topological specificity domain"/>
    <property type="match status" value="1"/>
</dbReference>
<name>MINE_BURMS</name>
<protein>
    <recommendedName>
        <fullName evidence="1">Cell division topological specificity factor</fullName>
    </recommendedName>
</protein>
<reference key="1">
    <citation type="journal article" date="2010" name="Genome Biol. Evol.">
        <title>Continuing evolution of Burkholderia mallei through genome reduction and large-scale rearrangements.</title>
        <authorList>
            <person name="Losada L."/>
            <person name="Ronning C.M."/>
            <person name="DeShazer D."/>
            <person name="Woods D."/>
            <person name="Fedorova N."/>
            <person name="Kim H.S."/>
            <person name="Shabalina S.A."/>
            <person name="Pearson T.R."/>
            <person name="Brinkac L."/>
            <person name="Tan P."/>
            <person name="Nandi T."/>
            <person name="Crabtree J."/>
            <person name="Badger J."/>
            <person name="Beckstrom-Sternberg S."/>
            <person name="Saqib M."/>
            <person name="Schutzer S.E."/>
            <person name="Keim P."/>
            <person name="Nierman W.C."/>
        </authorList>
    </citation>
    <scope>NUCLEOTIDE SEQUENCE [LARGE SCALE GENOMIC DNA]</scope>
    <source>
        <strain>SAVP1</strain>
    </source>
</reference>
<accession>A1V1P2</accession>
<organism>
    <name type="scientific">Burkholderia mallei (strain SAVP1)</name>
    <dbReference type="NCBI Taxonomy" id="320388"/>
    <lineage>
        <taxon>Bacteria</taxon>
        <taxon>Pseudomonadati</taxon>
        <taxon>Pseudomonadota</taxon>
        <taxon>Betaproteobacteria</taxon>
        <taxon>Burkholderiales</taxon>
        <taxon>Burkholderiaceae</taxon>
        <taxon>Burkholderia</taxon>
        <taxon>pseudomallei group</taxon>
    </lineage>
</organism>
<feature type="chain" id="PRO_1000047776" description="Cell division topological specificity factor">
    <location>
        <begin position="1"/>
        <end position="84"/>
    </location>
</feature>
<keyword id="KW-0131">Cell cycle</keyword>
<keyword id="KW-0132">Cell division</keyword>